<sequence length="140" mass="15112">MTVTIYHNPACGTSRNTLAMIRNAGIEPTVVEYLKNPPSRAELEAMIAAAGLTVRQAIREKGTPFAELGLGDPSRSDEELLDAMLEHPILINRPFVVAPLGTRLCRPSEVVLDILPDTHKGPFSKEDGEAVLDAGGKRIV</sequence>
<proteinExistence type="evidence at protein level"/>
<accession>Q92R44</accession>
<comment type="function">
    <text evidence="3">Involved in resistance to arsenate. Catalyzes the reduction of arsenate [As(V)] to arsenite [As(III)]. The resulting arsenite is then extruded from the cell via the aquaglyceroporin AqpS. Does not display antimonate reductase activity.</text>
</comment>
<comment type="catalytic activity">
    <reaction evidence="3">
        <text>[glutaredoxin]-dithiol + arsenate + glutathione + H(+) = glutathionyl-S-S-[glutaredoxin] + arsenite + H2O</text>
        <dbReference type="Rhea" id="RHEA:22016"/>
        <dbReference type="Rhea" id="RHEA-COMP:10729"/>
        <dbReference type="Rhea" id="RHEA-COMP:17668"/>
        <dbReference type="ChEBI" id="CHEBI:15377"/>
        <dbReference type="ChEBI" id="CHEBI:15378"/>
        <dbReference type="ChEBI" id="CHEBI:29242"/>
        <dbReference type="ChEBI" id="CHEBI:29950"/>
        <dbReference type="ChEBI" id="CHEBI:48597"/>
        <dbReference type="ChEBI" id="CHEBI:57925"/>
        <dbReference type="ChEBI" id="CHEBI:146199"/>
        <dbReference type="EC" id="1.20.4.1"/>
    </reaction>
</comment>
<comment type="biophysicochemical properties">
    <kinetics>
        <KM evidence="3">25 mM for arsenate</KM>
        <Vmax evidence="3">100.0 nmol/min/mg enzyme</Vmax>
    </kinetics>
</comment>
<comment type="disruption phenotype">
    <text evidence="3">Disruption mutant shows selective sensitivity to arsenate. Does not affect sensitivity to antimonate [Sb(V)].</text>
</comment>
<comment type="similarity">
    <text evidence="2">Belongs to the ArsC family.</text>
</comment>
<evidence type="ECO:0000250" key="1">
    <source>
        <dbReference type="UniProtKB" id="P08692"/>
    </source>
</evidence>
<evidence type="ECO:0000255" key="2">
    <source>
        <dbReference type="PROSITE-ProRule" id="PRU01282"/>
    </source>
</evidence>
<evidence type="ECO:0000269" key="3">
    <source>
    </source>
</evidence>
<evidence type="ECO:0000303" key="4">
    <source>
    </source>
</evidence>
<evidence type="ECO:0000305" key="5"/>
<evidence type="ECO:0000312" key="6">
    <source>
        <dbReference type="EMBL" id="CAC45654.1"/>
    </source>
</evidence>
<gene>
    <name evidence="4" type="primary">arsC</name>
    <name evidence="5" type="ordered locus">R01075</name>
    <name evidence="6" type="ORF">SMc02649</name>
</gene>
<dbReference type="EC" id="1.20.4.1" evidence="3"/>
<dbReference type="EMBL" id="AL591688">
    <property type="protein sequence ID" value="CAC45654.1"/>
    <property type="molecule type" value="Genomic_DNA"/>
</dbReference>
<dbReference type="RefSeq" id="NP_385181.1">
    <property type="nucleotide sequence ID" value="NC_003047.1"/>
</dbReference>
<dbReference type="RefSeq" id="WP_010969024.1">
    <property type="nucleotide sequence ID" value="NC_003047.1"/>
</dbReference>
<dbReference type="SMR" id="Q92R44"/>
<dbReference type="EnsemblBacteria" id="CAC45654">
    <property type="protein sequence ID" value="CAC45654"/>
    <property type="gene ID" value="SMc02649"/>
</dbReference>
<dbReference type="KEGG" id="sme:SMc02649"/>
<dbReference type="PATRIC" id="fig|266834.11.peg.2481"/>
<dbReference type="eggNOG" id="COG1393">
    <property type="taxonomic scope" value="Bacteria"/>
</dbReference>
<dbReference type="HOGENOM" id="CLU_116644_0_0_5"/>
<dbReference type="OrthoDB" id="9790554at2"/>
<dbReference type="BioCyc" id="MetaCyc:MONOMER-21683"/>
<dbReference type="Proteomes" id="UP000001976">
    <property type="component" value="Chromosome"/>
</dbReference>
<dbReference type="GO" id="GO:0008794">
    <property type="term" value="F:arsenate reductase (glutaredoxin) activity"/>
    <property type="evidence" value="ECO:0007669"/>
    <property type="project" value="UniProtKB-EC"/>
</dbReference>
<dbReference type="GO" id="GO:0046685">
    <property type="term" value="P:response to arsenic-containing substance"/>
    <property type="evidence" value="ECO:0007669"/>
    <property type="project" value="UniProtKB-KW"/>
</dbReference>
<dbReference type="CDD" id="cd03034">
    <property type="entry name" value="ArsC_ArsC"/>
    <property type="match status" value="1"/>
</dbReference>
<dbReference type="Gene3D" id="3.40.30.10">
    <property type="entry name" value="Glutaredoxin"/>
    <property type="match status" value="1"/>
</dbReference>
<dbReference type="InterPro" id="IPR006659">
    <property type="entry name" value="Arsenate_reductase"/>
</dbReference>
<dbReference type="InterPro" id="IPR006660">
    <property type="entry name" value="Arsenate_reductase-like"/>
</dbReference>
<dbReference type="InterPro" id="IPR036249">
    <property type="entry name" value="Thioredoxin-like_sf"/>
</dbReference>
<dbReference type="NCBIfam" id="TIGR00014">
    <property type="entry name" value="arsC"/>
    <property type="match status" value="1"/>
</dbReference>
<dbReference type="PANTHER" id="PTHR30041">
    <property type="entry name" value="ARSENATE REDUCTASE"/>
    <property type="match status" value="1"/>
</dbReference>
<dbReference type="PANTHER" id="PTHR30041:SF5">
    <property type="entry name" value="ARSENATE REDUCTASE-RELATED"/>
    <property type="match status" value="1"/>
</dbReference>
<dbReference type="Pfam" id="PF03960">
    <property type="entry name" value="ArsC"/>
    <property type="match status" value="1"/>
</dbReference>
<dbReference type="SUPFAM" id="SSF52833">
    <property type="entry name" value="Thioredoxin-like"/>
    <property type="match status" value="1"/>
</dbReference>
<dbReference type="PROSITE" id="PS51353">
    <property type="entry name" value="ARSC"/>
    <property type="match status" value="1"/>
</dbReference>
<protein>
    <recommendedName>
        <fullName evidence="4">Arsenate reductase</fullName>
        <ecNumber evidence="3">1.20.4.1</ecNumber>
    </recommendedName>
</protein>
<keyword id="KW-0059">Arsenical resistance</keyword>
<keyword id="KW-0560">Oxidoreductase</keyword>
<keyword id="KW-1185">Reference proteome</keyword>
<feature type="chain" id="PRO_0000453040" description="Arsenate reductase">
    <location>
        <begin position="1"/>
        <end position="140"/>
    </location>
</feature>
<feature type="active site" description="Nucleophile; cysteine thioarsenate intermediate" evidence="1 2">
    <location>
        <position position="11"/>
    </location>
</feature>
<feature type="site" description="Important for activity. Lowers pKa of the active site Cys" evidence="1">
    <location>
        <position position="7"/>
    </location>
</feature>
<feature type="site" description="Important for activity. Involved in arsenate binding and transition-state stabilization" evidence="1">
    <location>
        <position position="59"/>
    </location>
</feature>
<feature type="site" description="Important for activity. Involved in arsenate binding and transition-state stabilization" evidence="1">
    <location>
        <position position="93"/>
    </location>
</feature>
<feature type="site" description="Important for activity. Involved in arsenate binding and transition-state stabilization" evidence="1">
    <location>
        <position position="106"/>
    </location>
</feature>
<reference key="1">
    <citation type="journal article" date="2001" name="Proc. Natl. Acad. Sci. U.S.A.">
        <title>Analysis of the chromosome sequence of the legume symbiont Sinorhizobium meliloti strain 1021.</title>
        <authorList>
            <person name="Capela D."/>
            <person name="Barloy-Hubler F."/>
            <person name="Gouzy J."/>
            <person name="Bothe G."/>
            <person name="Ampe F."/>
            <person name="Batut J."/>
            <person name="Boistard P."/>
            <person name="Becker A."/>
            <person name="Boutry M."/>
            <person name="Cadieu E."/>
            <person name="Dreano S."/>
            <person name="Gloux S."/>
            <person name="Godrie T."/>
            <person name="Goffeau A."/>
            <person name="Kahn D."/>
            <person name="Kiss E."/>
            <person name="Lelaure V."/>
            <person name="Masuy D."/>
            <person name="Pohl T."/>
            <person name="Portetelle D."/>
            <person name="Puehler A."/>
            <person name="Purnelle B."/>
            <person name="Ramsperger U."/>
            <person name="Renard C."/>
            <person name="Thebault P."/>
            <person name="Vandenbol M."/>
            <person name="Weidner S."/>
            <person name="Galibert F."/>
        </authorList>
    </citation>
    <scope>NUCLEOTIDE SEQUENCE [LARGE SCALE GENOMIC DNA]</scope>
    <source>
        <strain>1021</strain>
    </source>
</reference>
<reference key="2">
    <citation type="journal article" date="2001" name="Science">
        <title>The composite genome of the legume symbiont Sinorhizobium meliloti.</title>
        <authorList>
            <person name="Galibert F."/>
            <person name="Finan T.M."/>
            <person name="Long S.R."/>
            <person name="Puehler A."/>
            <person name="Abola P."/>
            <person name="Ampe F."/>
            <person name="Barloy-Hubler F."/>
            <person name="Barnett M.J."/>
            <person name="Becker A."/>
            <person name="Boistard P."/>
            <person name="Bothe G."/>
            <person name="Boutry M."/>
            <person name="Bowser L."/>
            <person name="Buhrmester J."/>
            <person name="Cadieu E."/>
            <person name="Capela D."/>
            <person name="Chain P."/>
            <person name="Cowie A."/>
            <person name="Davis R.W."/>
            <person name="Dreano S."/>
            <person name="Federspiel N.A."/>
            <person name="Fisher R.F."/>
            <person name="Gloux S."/>
            <person name="Godrie T."/>
            <person name="Goffeau A."/>
            <person name="Golding B."/>
            <person name="Gouzy J."/>
            <person name="Gurjal M."/>
            <person name="Hernandez-Lucas I."/>
            <person name="Hong A."/>
            <person name="Huizar L."/>
            <person name="Hyman R.W."/>
            <person name="Jones T."/>
            <person name="Kahn D."/>
            <person name="Kahn M.L."/>
            <person name="Kalman S."/>
            <person name="Keating D.H."/>
            <person name="Kiss E."/>
            <person name="Komp C."/>
            <person name="Lelaure V."/>
            <person name="Masuy D."/>
            <person name="Palm C."/>
            <person name="Peck M.C."/>
            <person name="Pohl T.M."/>
            <person name="Portetelle D."/>
            <person name="Purnelle B."/>
            <person name="Ramsperger U."/>
            <person name="Surzycki R."/>
            <person name="Thebault P."/>
            <person name="Vandenbol M."/>
            <person name="Vorhoelter F.J."/>
            <person name="Weidner S."/>
            <person name="Wells D.H."/>
            <person name="Wong K."/>
            <person name="Yeh K.-C."/>
            <person name="Batut J."/>
        </authorList>
    </citation>
    <scope>NUCLEOTIDE SEQUENCE [LARGE SCALE GENOMIC DNA]</scope>
    <source>
        <strain>1021</strain>
    </source>
</reference>
<reference key="3">
    <citation type="journal article" date="2005" name="J. Bacteriol.">
        <title>Novel pathway for arsenic detoxification in the legume symbiont Sinorhizobium meliloti.</title>
        <authorList>
            <person name="Yang H.C."/>
            <person name="Cheng J."/>
            <person name="Finan T.M."/>
            <person name="Rosen B.P."/>
            <person name="Bhattacharjee H."/>
        </authorList>
    </citation>
    <scope>FUNCTION</scope>
    <scope>CATALYTIC ACTIVITY</scope>
    <scope>BIOPHYSICOCHEMICAL PROPERTIES</scope>
    <scope>DISRUPTION PHENOTYPE</scope>
    <source>
        <strain>1021</strain>
    </source>
</reference>
<organism>
    <name type="scientific">Rhizobium meliloti (strain 1021)</name>
    <name type="common">Ensifer meliloti</name>
    <name type="synonym">Sinorhizobium meliloti</name>
    <dbReference type="NCBI Taxonomy" id="266834"/>
    <lineage>
        <taxon>Bacteria</taxon>
        <taxon>Pseudomonadati</taxon>
        <taxon>Pseudomonadota</taxon>
        <taxon>Alphaproteobacteria</taxon>
        <taxon>Hyphomicrobiales</taxon>
        <taxon>Rhizobiaceae</taxon>
        <taxon>Sinorhizobium/Ensifer group</taxon>
        <taxon>Sinorhizobium</taxon>
    </lineage>
</organism>
<name>ARSC_RHIME</name>